<accession>Q2KN22</accession>
<proteinExistence type="evidence at transcript level"/>
<name>FCGRN_CAMDR</name>
<protein>
    <recommendedName>
        <fullName evidence="7">IgG receptor FcRn large subunit p51</fullName>
        <shortName evidence="6">FcRn</shortName>
    </recommendedName>
    <alternativeName>
        <fullName evidence="7">IgG Fc fragment receptor transporter alpha chain</fullName>
    </alternativeName>
    <alternativeName>
        <fullName evidence="6">Neonatal Fc receptor</fullName>
    </alternativeName>
</protein>
<keyword id="KW-1003">Cell membrane</keyword>
<keyword id="KW-1015">Disulfide bond</keyword>
<keyword id="KW-0967">Endosome</keyword>
<keyword id="KW-0325">Glycoprotein</keyword>
<keyword id="KW-0393">Immunoglobulin domain</keyword>
<keyword id="KW-0472">Membrane</keyword>
<keyword id="KW-0675">Receptor</keyword>
<keyword id="KW-0732">Signal</keyword>
<keyword id="KW-0812">Transmembrane</keyword>
<keyword id="KW-1133">Transmembrane helix</keyword>
<organism evidence="8">
    <name type="scientific">Camelus dromedarius</name>
    <name type="common">Dromedary</name>
    <name type="synonym">Arabian camel</name>
    <dbReference type="NCBI Taxonomy" id="9838"/>
    <lineage>
        <taxon>Eukaryota</taxon>
        <taxon>Metazoa</taxon>
        <taxon>Chordata</taxon>
        <taxon>Craniata</taxon>
        <taxon>Vertebrata</taxon>
        <taxon>Euteleostomi</taxon>
        <taxon>Mammalia</taxon>
        <taxon>Eutheria</taxon>
        <taxon>Laurasiatheria</taxon>
        <taxon>Artiodactyla</taxon>
        <taxon>Tylopoda</taxon>
        <taxon>Camelidae</taxon>
        <taxon>Camelus</taxon>
    </lineage>
</organism>
<evidence type="ECO:0000250" key="1">
    <source>
        <dbReference type="UniProtKB" id="P13599"/>
    </source>
</evidence>
<evidence type="ECO:0000250" key="2">
    <source>
        <dbReference type="UniProtKB" id="P55899"/>
    </source>
</evidence>
<evidence type="ECO:0000255" key="3"/>
<evidence type="ECO:0000255" key="4">
    <source>
        <dbReference type="PROSITE-ProRule" id="PRU00114"/>
    </source>
</evidence>
<evidence type="ECO:0000269" key="5">
    <source>
    </source>
</evidence>
<evidence type="ECO:0000303" key="6">
    <source>
    </source>
</evidence>
<evidence type="ECO:0000305" key="7"/>
<evidence type="ECO:0000312" key="8">
    <source>
        <dbReference type="EMBL" id="AAX82484.1"/>
    </source>
</evidence>
<sequence length="355" mass="39398">MRVPRSQPWGLALLLLLLPGTLRAAESHRSLLYHFTAVSNPASGTPAFSLSGWLGPQQYLSYNNLRAQAEPYGAWVWESQVSWYWEKETTDLRDKEKLFLEALKVFGDRDSYTLQGLLGCELGPDNVSVPMAKYALNGEEFMEFDPKLGIWDGDWPEARTIGIKWMKHPEAVNKEKTFLLYSCPHRLLGHLERGRGNLEWKEPPSMRLKARPGNPGFSVLTCSAFSFYPPELQLRFLRNGLAAGSGEGDVVPNGDGSFYAWSSLTVKSGDEHQYRCWVQHVGPAQPLTVELESPAKSSVPVIGISIGFLLLMTVAAGGALLWRRRKGLPAPWIAFRGDDIGALLPTPGLSKDAES</sequence>
<gene>
    <name evidence="7" type="primary">FCGRT</name>
    <name evidence="6" type="synonym">Fcrn</name>
</gene>
<comment type="function">
    <text evidence="1 2">Cell surface receptor that transfers passive humoral immunity from the mother to the newborn. Binds to the Fc region of monomeric immunoglobulin gamma and mediates its selective uptake from milk. IgG in the milk is bound at the apical surface of the intestinal epithelium. The resultant FcRn-IgG complexes are transcytosed across the intestinal epithelium and IgG is released from FcRn into blood or tissue fluids. Throughout life, contributes to effective humoral immunity by recycling IgG and extending its half-life in the circulation. Mechanistically, monomeric IgG binding to FcRn in acidic endosomes of endothelial and hematopoietic cells recycles IgG to the cell surface where it is released into the circulation. In addition of IgG, regulates homeostasis of the other most abundant circulating protein albumin/ALB.</text>
</comment>
<comment type="subunit">
    <text evidence="1 2">FcRn complex consists of two subunits: p51, and p14 which is equivalent to beta-2-microglobulin. It forms an MHC class I-like heterodimer (By similarity). Interacts with albumin/ALB; this interaction regulates ALB homeostasis (By similarity).</text>
</comment>
<comment type="subcellular location">
    <subcellularLocation>
        <location evidence="1">Cell membrane</location>
        <topology evidence="3">Single-pass type I membrane protein</topology>
    </subcellularLocation>
    <subcellularLocation>
        <location evidence="2">Endosome membrane</location>
    </subcellularLocation>
</comment>
<comment type="tissue specificity">
    <text evidence="5">Expressed in liver and mammary gland of non-lactating animals. Expressed in hepatocytes and in epithelial cells of portal bile ductuli. Not expressed in the brances of portal veins or hepatic arteries. Expressed in the epithelial cells of the acini and ducti in the mammary gland with expression emphasized at the apical side. Not expressed in blood vessels of mammary gland.</text>
</comment>
<comment type="similarity">
    <text evidence="7">Belongs to the immunoglobulin superfamily.</text>
</comment>
<dbReference type="EMBL" id="AY894681">
    <property type="protein sequence ID" value="AAX82484.1"/>
    <property type="molecule type" value="mRNA"/>
</dbReference>
<dbReference type="RefSeq" id="NP_001290499.1">
    <property type="nucleotide sequence ID" value="NM_001303570.1"/>
</dbReference>
<dbReference type="SMR" id="Q2KN22"/>
<dbReference type="STRING" id="9838.ENSCDRP00005010759"/>
<dbReference type="GlyCosmos" id="Q2KN22">
    <property type="glycosylation" value="1 site, No reported glycans"/>
</dbReference>
<dbReference type="GeneID" id="105100203"/>
<dbReference type="KEGG" id="cdk:105100203"/>
<dbReference type="CTD" id="2217"/>
<dbReference type="OrthoDB" id="8890485at2759"/>
<dbReference type="GO" id="GO:0010008">
    <property type="term" value="C:endosome membrane"/>
    <property type="evidence" value="ECO:0007669"/>
    <property type="project" value="UniProtKB-SubCell"/>
</dbReference>
<dbReference type="GO" id="GO:0009897">
    <property type="term" value="C:external side of plasma membrane"/>
    <property type="evidence" value="ECO:0007669"/>
    <property type="project" value="TreeGrafter"/>
</dbReference>
<dbReference type="GO" id="GO:0005615">
    <property type="term" value="C:extracellular space"/>
    <property type="evidence" value="ECO:0007669"/>
    <property type="project" value="TreeGrafter"/>
</dbReference>
<dbReference type="GO" id="GO:0030881">
    <property type="term" value="F:beta-2-microglobulin binding"/>
    <property type="evidence" value="ECO:0007669"/>
    <property type="project" value="TreeGrafter"/>
</dbReference>
<dbReference type="GO" id="GO:0006955">
    <property type="term" value="P:immune response"/>
    <property type="evidence" value="ECO:0007669"/>
    <property type="project" value="TreeGrafter"/>
</dbReference>
<dbReference type="CDD" id="cd21011">
    <property type="entry name" value="IgC1_MHC-like_FcRn"/>
    <property type="match status" value="1"/>
</dbReference>
<dbReference type="FunFam" id="2.60.40.10:FF:000693">
    <property type="entry name" value="IgG receptor FcRn large subunit p51"/>
    <property type="match status" value="1"/>
</dbReference>
<dbReference type="FunFam" id="3.30.500.10:FF:000003">
    <property type="entry name" value="IgG receptor FcRn large subunit p51"/>
    <property type="match status" value="1"/>
</dbReference>
<dbReference type="Gene3D" id="2.60.40.10">
    <property type="entry name" value="Immunoglobulins"/>
    <property type="match status" value="1"/>
</dbReference>
<dbReference type="Gene3D" id="3.30.500.10">
    <property type="entry name" value="MHC class I-like antigen recognition-like"/>
    <property type="match status" value="1"/>
</dbReference>
<dbReference type="InterPro" id="IPR007110">
    <property type="entry name" value="Ig-like_dom"/>
</dbReference>
<dbReference type="InterPro" id="IPR036179">
    <property type="entry name" value="Ig-like_dom_sf"/>
</dbReference>
<dbReference type="InterPro" id="IPR013783">
    <property type="entry name" value="Ig-like_fold"/>
</dbReference>
<dbReference type="InterPro" id="IPR003006">
    <property type="entry name" value="Ig/MHC_CS"/>
</dbReference>
<dbReference type="InterPro" id="IPR003597">
    <property type="entry name" value="Ig_C1-set"/>
</dbReference>
<dbReference type="InterPro" id="IPR050208">
    <property type="entry name" value="MHC_class-I_related"/>
</dbReference>
<dbReference type="InterPro" id="IPR011161">
    <property type="entry name" value="MHC_I-like_Ag-recog"/>
</dbReference>
<dbReference type="InterPro" id="IPR037055">
    <property type="entry name" value="MHC_I-like_Ag-recog_sf"/>
</dbReference>
<dbReference type="InterPro" id="IPR011162">
    <property type="entry name" value="MHC_I/II-like_Ag-recog"/>
</dbReference>
<dbReference type="PANTHER" id="PTHR16675:SF3">
    <property type="entry name" value="IGG RECEPTOR FCRN LARGE SUBUNIT P51"/>
    <property type="match status" value="1"/>
</dbReference>
<dbReference type="PANTHER" id="PTHR16675">
    <property type="entry name" value="MHC CLASS I-RELATED"/>
    <property type="match status" value="1"/>
</dbReference>
<dbReference type="Pfam" id="PF07654">
    <property type="entry name" value="C1-set"/>
    <property type="match status" value="1"/>
</dbReference>
<dbReference type="Pfam" id="PF00129">
    <property type="entry name" value="MHC_I"/>
    <property type="match status" value="1"/>
</dbReference>
<dbReference type="SMART" id="SM00407">
    <property type="entry name" value="IGc1"/>
    <property type="match status" value="1"/>
</dbReference>
<dbReference type="SUPFAM" id="SSF48726">
    <property type="entry name" value="Immunoglobulin"/>
    <property type="match status" value="1"/>
</dbReference>
<dbReference type="SUPFAM" id="SSF54452">
    <property type="entry name" value="MHC antigen-recognition domain"/>
    <property type="match status" value="1"/>
</dbReference>
<dbReference type="PROSITE" id="PS50835">
    <property type="entry name" value="IG_LIKE"/>
    <property type="match status" value="1"/>
</dbReference>
<dbReference type="PROSITE" id="PS00290">
    <property type="entry name" value="IG_MHC"/>
    <property type="match status" value="1"/>
</dbReference>
<feature type="signal peptide" evidence="3">
    <location>
        <begin position="1"/>
        <end position="24"/>
    </location>
</feature>
<feature type="chain" id="PRO_5004211833" description="IgG receptor FcRn large subunit p51" evidence="3">
    <location>
        <begin position="25"/>
        <end position="355"/>
    </location>
</feature>
<feature type="topological domain" description="Extracellular" evidence="3">
    <location>
        <begin position="25"/>
        <end position="300"/>
    </location>
</feature>
<feature type="transmembrane region" description="Helical" evidence="3">
    <location>
        <begin position="301"/>
        <end position="321"/>
    </location>
</feature>
<feature type="topological domain" description="Cytoplasmic" evidence="3">
    <location>
        <begin position="322"/>
        <end position="355"/>
    </location>
</feature>
<feature type="domain" description="Ig-like C1-type" evidence="4">
    <location>
        <begin position="203"/>
        <end position="292"/>
    </location>
</feature>
<feature type="region of interest" description="Alpha-1" evidence="1">
    <location>
        <begin position="25"/>
        <end position="111"/>
    </location>
</feature>
<feature type="region of interest" description="Alpha-2" evidence="1">
    <location>
        <begin position="112"/>
        <end position="201"/>
    </location>
</feature>
<feature type="region of interest" description="Alpha-3" evidence="1">
    <location>
        <begin position="202"/>
        <end position="291"/>
    </location>
</feature>
<feature type="region of interest" description="Connecting peptide" evidence="7">
    <location>
        <begin position="293"/>
        <end position="298"/>
    </location>
</feature>
<feature type="glycosylation site" description="N-linked (GlcNAc...) asparagine" evidence="3">
    <location>
        <position position="126"/>
    </location>
</feature>
<feature type="disulfide bond" evidence="4">
    <location>
        <begin position="222"/>
        <end position="276"/>
    </location>
</feature>
<reference evidence="8" key="1">
    <citation type="journal article" date="2006" name="Dev. Comp. Immunol.">
        <title>Cloning and characterization of the dromedary (Camelus dromedarius) neonatal Fc receptor (drFcRn).</title>
        <authorList>
            <person name="Kacskovics I."/>
            <person name="Mayer B."/>
            <person name="Kis Z."/>
            <person name="Frenyo L.V."/>
            <person name="Zhao Y."/>
            <person name="Muyldermans S."/>
            <person name="Hammarstrom L."/>
        </authorList>
    </citation>
    <scope>NUCLEOTIDE SEQUENCE [MRNA]</scope>
    <scope>TISSUE SPECIFICITY</scope>
    <scope>PHYLOGENETIC ANALYSIS</scope>
</reference>